<sequence length="2322" mass="250537">MQSGPRPPLPAPGLALALTLTMLARLASAASFFGENHLEVPVATALTDIDLQLQFSTSQPEALLLLAAGPADHLLLQLYSGRLQVRLVLGQEELRLQTPAETLLSDSIPHTVVLTVVEGWATLSVDGFLNASSAVPGAPLEVPYGLFVGGTGTLGLPYLRGTSRPLRGCLHAATLNGRSLLRPLTPDVHEGCAEEFSASDDVALGFSGPHSLAAFPAWGTQDEGTLEFTLTTQSRQAPLAFQAGGRRGDFIYVDIFEGHLRAVVEKGQGTVLLHNSVPVADGQPHEVSVHINAHRLEISVDQYPTHTSNRGVLSYLEPRGSLLLGGLDAEASRHLQEHRLGLTPEATNASLLGCMEDLSVNGQRRGLREALLTRNMAAGCRLEEEEYEDDAYGHYEAFSTLAPEAWPAMELPEPCVPEPGLPPVFANFTQLLTISPLVVAEGGTAWLEWRHVQPTLDLMEAELRKSQVLFSVTRGARHGELELDIPGAQARKMFTLLDVVNRKARFIHDGSEDTSDQLVLEVSVTARVPMPSCLRRGQTYLLPIQVNPVNDPPHIIFPHGSLMVILEHTQKPLGPEVFQAYDPDSACEGLTFQVLGTSSGLPVERRDQPGEPATEFSCRELEAGSLVYVHRGGPAQDLTFRVSDGLQASPPATLKVVAIRPAIQIHRSTGLRLAQGSAMPILPANLSVETNAVGQDVSVLFRVTGALQFGELQKQGAGGVEGAEWWATQAFHQRDVEQGRVRYLSTDPQHHAYDTVENLALEVQVGQEILSNLSFPVTIQRATVWMLRLEPLHTQNTQQETLTTAHLEATLEEAGPSPPTFHYEVVQAPRKGNLQLQGTRLSDGQGFTQDDIQAGRVTYGATARASEAVEDTFRFRVTAPPYFSPLYTFPIHIGGDPDAPVLTNVLLVVPEGGEGVLSADHLFVKSLNSASYLYEVMERPRHGRLAWRGTQDKTTMVTSFTNEDLLRGRLVYQHDDSETTEDDIPFVATRQGESSGDMAWEEVRGVFRVAIQPVNDHAPVQTISRIFHVARGGRRLLTTDDVAFSDADSGFADAQLVLTRKDLLFGSIVAVDEPTRPIYRFTQEDLRKRRVLFVHSGADRGWIQLQVSDGQHQATALLEVQASEPYLRVANGSSLVVPQGGQGTIDTAVLHLDTNLDIRSGDEVHYHVTAGPRWGQLVRAGQPATAFSQQDLLDGAVLYSHNGSLSPRDTMAFSVEAGPVHTDATLQVTIALEGPLAPLKLVRHKKIYVFQGEAAEIRRDQLEAAQEAVPPADIVFSVKSPPSAGYLVMVSRGALADEPPSLDPVQSFSQEAVDTGRVLYLHSRPEAWSDAFSLDVASGLGAPLEGVLVELEVLPAAIPLEAQNFSVPEGGSLTLAPPLLRVSGPYFPTLLGLSLQVLEPPQHGALQKEDGPQARTLSAFSWRMVEEQLIRYVHDGSETLTDSFVLMANASEMDRQSHPVAFTVTVLPVNDQPPILTTNTGLQMWEGATAPIPAEALRSTDGDSGSEDLVYTIEQPSNGRVVLRGAPGTEVRSFTQAQLDGGLVLFSHRGTLDGGFRFRLSDGEHTSPGHFFRVTAQKQVLLSLKGSQTLTVCPGSVQPLSSQTLRASSSAGTDPQLLLYRVVRGPQLGRLFHAQQDSTGEALVNFTQAEVYAGNILYEHEMPPEPFWEAHDTLELQLSSPPARDVAATLAVAVSFEAACPQRPSHLWKNKGLWVPEGQRARITVAALDASNLLASVPSPQRSEHDVLFQVTQFPSRGQLLVSEEPLHAGQPHFLQSQLAAGQLVYAHGGGGTQQDGFHFRAHLQGPAGASVAGPQTSEAFAITVRDVNERPPQPQASVPLRLTRGSRAPISRAQLSVVDPDSAPGEIEYEVQRAPHNGFLSLVGGGLGPVTRFTQADVDSGRLAFVANGSSVAGIFQLSMSDGASPPLPMSLAVDILPSAIEVQLRAPLEVPQALGRSSLSQQQLRVVSDREEPEAAYRLIQGPQYGHLLVGGRPTSAFSQFQIDQGEVVFAFTNFSSSHDHFRVLALARGVNASAVVNVTVRALLHVWAGGPWPQGATLRLDPTVLDAGELANRTGSVPRFRLLEGPRHGRVVRVPRARTEPGGSQLVEQFTQQDLEDGRLGLEVGRPEGRAPGPAGDSLTLELWAQGVPPAVASLDFATEPYNAARPYSVALLSVPEAARTEAGKPESSTPTGEPGPMASSPEPAVAKGGFLSFLEANMFSVIIPMCLVLLLLALILPLLFYLRKRNKTGKHDVQVLTAKPRNGLAGDTETFRKVEPGQAIPLTAVPGQGPPPGGQPDPELLQFCRTPNPALKNGQYWV</sequence>
<evidence type="ECO:0000250" key="1"/>
<evidence type="ECO:0000250" key="2">
    <source>
        <dbReference type="UniProtKB" id="Q00657"/>
    </source>
</evidence>
<evidence type="ECO:0000250" key="3">
    <source>
        <dbReference type="UniProtKB" id="Q8VHY0"/>
    </source>
</evidence>
<evidence type="ECO:0000255" key="4"/>
<evidence type="ECO:0000255" key="5">
    <source>
        <dbReference type="PROSITE-ProRule" id="PRU00122"/>
    </source>
</evidence>
<evidence type="ECO:0000255" key="6">
    <source>
        <dbReference type="PROSITE-ProRule" id="PRU01201"/>
    </source>
</evidence>
<evidence type="ECO:0000256" key="7">
    <source>
        <dbReference type="SAM" id="MobiDB-lite"/>
    </source>
</evidence>
<evidence type="ECO:0000269" key="8">
    <source>
    </source>
</evidence>
<evidence type="ECO:0000269" key="9">
    <source>
    </source>
</evidence>
<evidence type="ECO:0000269" key="10">
    <source>
    </source>
</evidence>
<evidence type="ECO:0000269" key="11">
    <source>
    </source>
</evidence>
<evidence type="ECO:0000269" key="12">
    <source>
    </source>
</evidence>
<evidence type="ECO:0000269" key="13">
    <source>
    </source>
</evidence>
<evidence type="ECO:0000269" key="14">
    <source>
    </source>
</evidence>
<evidence type="ECO:0000269" key="15">
    <source>
    </source>
</evidence>
<evidence type="ECO:0000269" key="16">
    <source>
    </source>
</evidence>
<evidence type="ECO:0000269" key="17">
    <source>
    </source>
</evidence>
<evidence type="ECO:0000269" key="18">
    <source>
    </source>
</evidence>
<evidence type="ECO:0000269" key="19">
    <source>
    </source>
</evidence>
<evidence type="ECO:0000269" key="20">
    <source>
    </source>
</evidence>
<evidence type="ECO:0000305" key="21"/>
<evidence type="ECO:0007829" key="22">
    <source>
        <dbReference type="PDB" id="7ML7"/>
    </source>
</evidence>
<evidence type="ECO:0007829" key="23">
    <source>
        <dbReference type="PDB" id="7N8X"/>
    </source>
</evidence>
<accession>Q6UVK1</accession>
<accession>D3DW77</accession>
<accession>Q92675</accession>
<organism>
    <name type="scientific">Homo sapiens</name>
    <name type="common">Human</name>
    <dbReference type="NCBI Taxonomy" id="9606"/>
    <lineage>
        <taxon>Eukaryota</taxon>
        <taxon>Metazoa</taxon>
        <taxon>Chordata</taxon>
        <taxon>Craniata</taxon>
        <taxon>Vertebrata</taxon>
        <taxon>Euteleostomi</taxon>
        <taxon>Mammalia</taxon>
        <taxon>Eutheria</taxon>
        <taxon>Euarchontoglires</taxon>
        <taxon>Primates</taxon>
        <taxon>Haplorrhini</taxon>
        <taxon>Catarrhini</taxon>
        <taxon>Hominidae</taxon>
        <taxon>Homo</taxon>
    </lineage>
</organism>
<keyword id="KW-0002">3D-structure</keyword>
<keyword id="KW-0037">Angiogenesis</keyword>
<keyword id="KW-1003">Cell membrane</keyword>
<keyword id="KW-0966">Cell projection</keyword>
<keyword id="KW-0217">Developmental protein</keyword>
<keyword id="KW-0221">Differentiation</keyword>
<keyword id="KW-1015">Disulfide bond</keyword>
<keyword id="KW-0325">Glycoprotein</keyword>
<keyword id="KW-0472">Membrane</keyword>
<keyword id="KW-0597">Phosphoprotein</keyword>
<keyword id="KW-0654">Proteoglycan</keyword>
<keyword id="KW-1267">Proteomics identification</keyword>
<keyword id="KW-1185">Reference proteome</keyword>
<keyword id="KW-0677">Repeat</keyword>
<keyword id="KW-0732">Signal</keyword>
<keyword id="KW-0797">Tissue remodeling</keyword>
<keyword id="KW-0807">Transducer</keyword>
<keyword id="KW-0812">Transmembrane</keyword>
<keyword id="KW-1133">Transmembrane helix</keyword>
<gene>
    <name type="primary">CSPG4</name>
    <name type="synonym">MCSP</name>
</gene>
<name>CSPG4_HUMAN</name>
<dbReference type="EMBL" id="X96753">
    <property type="protein sequence ID" value="CAA65529.1"/>
    <property type="molecule type" value="mRNA"/>
</dbReference>
<dbReference type="EMBL" id="AY359468">
    <property type="protein sequence ID" value="AAQ62842.1"/>
    <property type="molecule type" value="mRNA"/>
</dbReference>
<dbReference type="EMBL" id="AC105020">
    <property type="status" value="NOT_ANNOTATED_CDS"/>
    <property type="molecule type" value="Genomic_DNA"/>
</dbReference>
<dbReference type="EMBL" id="CH471136">
    <property type="protein sequence ID" value="EAW99239.1"/>
    <property type="molecule type" value="Genomic_DNA"/>
</dbReference>
<dbReference type="EMBL" id="CH471136">
    <property type="protein sequence ID" value="EAW99240.1"/>
    <property type="molecule type" value="Genomic_DNA"/>
</dbReference>
<dbReference type="CCDS" id="CCDS10284.1"/>
<dbReference type="RefSeq" id="NP_001888.2">
    <property type="nucleotide sequence ID" value="NM_001897.4"/>
</dbReference>
<dbReference type="PDB" id="7ML7">
    <property type="method" value="EM"/>
    <property type="resolution" value="3.17 A"/>
    <property type="chains" value="B=30-764"/>
</dbReference>
<dbReference type="PDB" id="7N8X">
    <property type="method" value="EM"/>
    <property type="resolution" value="3.40 A"/>
    <property type="chains" value="B=411-550"/>
</dbReference>
<dbReference type="PDB" id="7N9Y">
    <property type="method" value="EM"/>
    <property type="resolution" value="4.80 A"/>
    <property type="chains" value="B=411-550"/>
</dbReference>
<dbReference type="PDBsum" id="7ML7"/>
<dbReference type="PDBsum" id="7N8X"/>
<dbReference type="PDBsum" id="7N9Y"/>
<dbReference type="EMDB" id="EMD-23909"/>
<dbReference type="EMDB" id="EMD-24248"/>
<dbReference type="EMDB" id="EMD-24264"/>
<dbReference type="SMR" id="Q6UVK1"/>
<dbReference type="BioGRID" id="107846">
    <property type="interactions" value="155"/>
</dbReference>
<dbReference type="CORUM" id="Q6UVK1"/>
<dbReference type="FunCoup" id="Q6UVK1">
    <property type="interactions" value="469"/>
</dbReference>
<dbReference type="IntAct" id="Q6UVK1">
    <property type="interactions" value="65"/>
</dbReference>
<dbReference type="MINT" id="Q6UVK1"/>
<dbReference type="STRING" id="9606.ENSP00000312506"/>
<dbReference type="GlyConnect" id="2028">
    <property type="glycosylation" value="1 N-Linked glycan (1 site)"/>
</dbReference>
<dbReference type="GlyCosmos" id="Q6UVK1">
    <property type="glycosylation" value="18 sites, 5 glycans"/>
</dbReference>
<dbReference type="GlyGen" id="Q6UVK1">
    <property type="glycosylation" value="20 sites, 25 N-linked glycans (9 sites), 4 O-linked glycans (3 sites)"/>
</dbReference>
<dbReference type="iPTMnet" id="Q6UVK1"/>
<dbReference type="PhosphoSitePlus" id="Q6UVK1"/>
<dbReference type="BioMuta" id="CSPG4"/>
<dbReference type="DMDM" id="296434468"/>
<dbReference type="jPOST" id="Q6UVK1"/>
<dbReference type="MassIVE" id="Q6UVK1"/>
<dbReference type="PaxDb" id="9606-ENSP00000312506"/>
<dbReference type="PeptideAtlas" id="Q6UVK1"/>
<dbReference type="ProteomicsDB" id="67431"/>
<dbReference type="Pumba" id="Q6UVK1"/>
<dbReference type="ABCD" id="Q6UVK1">
    <property type="antibodies" value="53 sequenced antibodies"/>
</dbReference>
<dbReference type="Antibodypedia" id="1108">
    <property type="antibodies" value="776 antibodies from 41 providers"/>
</dbReference>
<dbReference type="DNASU" id="1464"/>
<dbReference type="Ensembl" id="ENST00000308508.5">
    <property type="protein sequence ID" value="ENSP00000312506.5"/>
    <property type="gene ID" value="ENSG00000173546.7"/>
</dbReference>
<dbReference type="GeneID" id="1464"/>
<dbReference type="KEGG" id="hsa:1464"/>
<dbReference type="MANE-Select" id="ENST00000308508.5">
    <property type="protein sequence ID" value="ENSP00000312506.5"/>
    <property type="RefSeq nucleotide sequence ID" value="NM_001897.5"/>
    <property type="RefSeq protein sequence ID" value="NP_001888.2"/>
</dbReference>
<dbReference type="UCSC" id="uc002baw.3">
    <property type="organism name" value="human"/>
</dbReference>
<dbReference type="AGR" id="HGNC:2466"/>
<dbReference type="CTD" id="1464"/>
<dbReference type="DisGeNET" id="1464"/>
<dbReference type="GeneCards" id="CSPG4"/>
<dbReference type="HGNC" id="HGNC:2466">
    <property type="gene designation" value="CSPG4"/>
</dbReference>
<dbReference type="HPA" id="ENSG00000173546">
    <property type="expression patterns" value="Tissue enhanced (intestine)"/>
</dbReference>
<dbReference type="MIM" id="601172">
    <property type="type" value="gene"/>
</dbReference>
<dbReference type="neXtProt" id="NX_Q6UVK1"/>
<dbReference type="OpenTargets" id="ENSG00000173546"/>
<dbReference type="PharmGKB" id="PA26963"/>
<dbReference type="VEuPathDB" id="HostDB:ENSG00000173546"/>
<dbReference type="eggNOG" id="KOG3597">
    <property type="taxonomic scope" value="Eukaryota"/>
</dbReference>
<dbReference type="GeneTree" id="ENSGT00940000154091"/>
<dbReference type="HOGENOM" id="CLU_000473_1_0_1"/>
<dbReference type="InParanoid" id="Q6UVK1"/>
<dbReference type="OMA" id="PWPQGTT"/>
<dbReference type="OrthoDB" id="9026019at2759"/>
<dbReference type="PAN-GO" id="Q6UVK1">
    <property type="GO annotations" value="0 GO annotations based on evolutionary models"/>
</dbReference>
<dbReference type="PhylomeDB" id="Q6UVK1"/>
<dbReference type="TreeFam" id="TF316876"/>
<dbReference type="PathwayCommons" id="Q6UVK1"/>
<dbReference type="Reactome" id="R-HSA-1971475">
    <property type="pathway name" value="A tetrasaccharide linker sequence is required for GAG synthesis"/>
</dbReference>
<dbReference type="Reactome" id="R-HSA-2022870">
    <property type="pathway name" value="Chondroitin sulfate biosynthesis"/>
</dbReference>
<dbReference type="Reactome" id="R-HSA-2022923">
    <property type="pathway name" value="Dermatan sulfate biosynthesis"/>
</dbReference>
<dbReference type="Reactome" id="R-HSA-2024101">
    <property type="pathway name" value="CS/DS degradation"/>
</dbReference>
<dbReference type="Reactome" id="R-HSA-3560783">
    <property type="pathway name" value="Defective B4GALT7 causes EDS, progeroid type"/>
</dbReference>
<dbReference type="Reactome" id="R-HSA-3560801">
    <property type="pathway name" value="Defective B3GAT3 causes JDSSDHD"/>
</dbReference>
<dbReference type="Reactome" id="R-HSA-3595172">
    <property type="pathway name" value="Defective CHST3 causes SEDCJD"/>
</dbReference>
<dbReference type="Reactome" id="R-HSA-3595174">
    <property type="pathway name" value="Defective CHST14 causes EDS, musculocontractural type"/>
</dbReference>
<dbReference type="Reactome" id="R-HSA-3595177">
    <property type="pathway name" value="Defective CHSY1 causes TPBS"/>
</dbReference>
<dbReference type="Reactome" id="R-HSA-4420332">
    <property type="pathway name" value="Defective B3GALT6 causes EDSP2 and SEMDJL1"/>
</dbReference>
<dbReference type="Reactome" id="R-HSA-9725554">
    <property type="pathway name" value="Differentiation of Keratinocytes in Interfollicular Epidermis in Mammalian Skin"/>
</dbReference>
<dbReference type="SignaLink" id="Q6UVK1"/>
<dbReference type="SIGNOR" id="Q6UVK1"/>
<dbReference type="BioGRID-ORCS" id="1464">
    <property type="hits" value="30 hits in 1150 CRISPR screens"/>
</dbReference>
<dbReference type="ChiTaRS" id="CSPG4">
    <property type="organism name" value="human"/>
</dbReference>
<dbReference type="GeneWiki" id="CSPG4"/>
<dbReference type="GenomeRNAi" id="1464"/>
<dbReference type="Pharos" id="Q6UVK1">
    <property type="development level" value="Tbio"/>
</dbReference>
<dbReference type="PRO" id="PR:Q6UVK1"/>
<dbReference type="Proteomes" id="UP000005640">
    <property type="component" value="Chromosome 15"/>
</dbReference>
<dbReference type="RNAct" id="Q6UVK1">
    <property type="molecule type" value="protein"/>
</dbReference>
<dbReference type="Bgee" id="ENSG00000173546">
    <property type="expression patterns" value="Expressed in tendon of biceps brachii and 132 other cell types or tissues"/>
</dbReference>
<dbReference type="GO" id="GO:0016324">
    <property type="term" value="C:apical plasma membrane"/>
    <property type="evidence" value="ECO:0007669"/>
    <property type="project" value="UniProtKB-SubCell"/>
</dbReference>
<dbReference type="GO" id="GO:0009986">
    <property type="term" value="C:cell surface"/>
    <property type="evidence" value="ECO:0007005"/>
    <property type="project" value="UniProtKB"/>
</dbReference>
<dbReference type="GO" id="GO:0062023">
    <property type="term" value="C:collagen-containing extracellular matrix"/>
    <property type="evidence" value="ECO:0007005"/>
    <property type="project" value="BHF-UCL"/>
</dbReference>
<dbReference type="GO" id="GO:0070062">
    <property type="term" value="C:extracellular exosome"/>
    <property type="evidence" value="ECO:0007005"/>
    <property type="project" value="UniProtKB"/>
</dbReference>
<dbReference type="GO" id="GO:0005576">
    <property type="term" value="C:extracellular region"/>
    <property type="evidence" value="ECO:0000304"/>
    <property type="project" value="Reactome"/>
</dbReference>
<dbReference type="GO" id="GO:0005925">
    <property type="term" value="C:focal adhesion"/>
    <property type="evidence" value="ECO:0007005"/>
    <property type="project" value="UniProtKB"/>
</dbReference>
<dbReference type="GO" id="GO:0005796">
    <property type="term" value="C:Golgi lumen"/>
    <property type="evidence" value="ECO:0000304"/>
    <property type="project" value="Reactome"/>
</dbReference>
<dbReference type="GO" id="GO:0031258">
    <property type="term" value="C:lamellipodium membrane"/>
    <property type="evidence" value="ECO:0007669"/>
    <property type="project" value="UniProtKB-SubCell"/>
</dbReference>
<dbReference type="GO" id="GO:0043202">
    <property type="term" value="C:lysosomal lumen"/>
    <property type="evidence" value="ECO:0000304"/>
    <property type="project" value="Reactome"/>
</dbReference>
<dbReference type="GO" id="GO:0005654">
    <property type="term" value="C:nucleoplasm"/>
    <property type="evidence" value="ECO:0000314"/>
    <property type="project" value="HPA"/>
</dbReference>
<dbReference type="GO" id="GO:0005886">
    <property type="term" value="C:plasma membrane"/>
    <property type="evidence" value="ECO:0000314"/>
    <property type="project" value="HPA"/>
</dbReference>
<dbReference type="GO" id="GO:0001726">
    <property type="term" value="C:ruffle"/>
    <property type="evidence" value="ECO:0007669"/>
    <property type="project" value="Ensembl"/>
</dbReference>
<dbReference type="GO" id="GO:0015026">
    <property type="term" value="F:coreceptor activity"/>
    <property type="evidence" value="ECO:0007669"/>
    <property type="project" value="Ensembl"/>
</dbReference>
<dbReference type="GO" id="GO:0019901">
    <property type="term" value="F:protein kinase binding"/>
    <property type="evidence" value="ECO:0000353"/>
    <property type="project" value="UniProtKB"/>
</dbReference>
<dbReference type="GO" id="GO:0001525">
    <property type="term" value="P:angiogenesis"/>
    <property type="evidence" value="ECO:0007669"/>
    <property type="project" value="UniProtKB-KW"/>
</dbReference>
<dbReference type="GO" id="GO:0008347">
    <property type="term" value="P:glial cell migration"/>
    <property type="evidence" value="ECO:0007669"/>
    <property type="project" value="Ensembl"/>
</dbReference>
<dbReference type="GO" id="GO:0035556">
    <property type="term" value="P:intracellular signal transduction"/>
    <property type="evidence" value="ECO:0000314"/>
    <property type="project" value="UniProtKB"/>
</dbReference>
<dbReference type="GO" id="GO:0048008">
    <property type="term" value="P:platelet-derived growth factor receptor signaling pathway"/>
    <property type="evidence" value="ECO:0007669"/>
    <property type="project" value="Ensembl"/>
</dbReference>
<dbReference type="GO" id="GO:0043410">
    <property type="term" value="P:positive regulation of MAPK cascade"/>
    <property type="evidence" value="ECO:0007669"/>
    <property type="project" value="Ensembl"/>
</dbReference>
<dbReference type="GO" id="GO:0050731">
    <property type="term" value="P:positive regulation of peptidyl-tyrosine phosphorylation"/>
    <property type="evidence" value="ECO:0000314"/>
    <property type="project" value="UniProtKB"/>
</dbReference>
<dbReference type="GO" id="GO:0097178">
    <property type="term" value="P:ruffle assembly"/>
    <property type="evidence" value="ECO:0007669"/>
    <property type="project" value="Ensembl"/>
</dbReference>
<dbReference type="GO" id="GO:0006929">
    <property type="term" value="P:substrate-dependent cell migration"/>
    <property type="evidence" value="ECO:0007669"/>
    <property type="project" value="Ensembl"/>
</dbReference>
<dbReference type="GO" id="GO:0048771">
    <property type="term" value="P:tissue remodeling"/>
    <property type="evidence" value="ECO:0007669"/>
    <property type="project" value="UniProtKB-KW"/>
</dbReference>
<dbReference type="CDD" id="cd00110">
    <property type="entry name" value="LamG"/>
    <property type="match status" value="2"/>
</dbReference>
<dbReference type="FunFam" id="2.60.120.200:FF:000158">
    <property type="entry name" value="Chondroitin sulfate proteoglycan 4"/>
    <property type="match status" value="1"/>
</dbReference>
<dbReference type="FunFam" id="2.60.120.200:FF:000248">
    <property type="entry name" value="Chondroitin sulfate proteoglycan 4"/>
    <property type="match status" value="1"/>
</dbReference>
<dbReference type="Gene3D" id="2.60.120.200">
    <property type="match status" value="2"/>
</dbReference>
<dbReference type="InterPro" id="IPR013320">
    <property type="entry name" value="ConA-like_dom_sf"/>
</dbReference>
<dbReference type="InterPro" id="IPR039005">
    <property type="entry name" value="CSPG_rpt"/>
</dbReference>
<dbReference type="InterPro" id="IPR051561">
    <property type="entry name" value="FRAS1_ECM"/>
</dbReference>
<dbReference type="InterPro" id="IPR001791">
    <property type="entry name" value="Laminin_G"/>
</dbReference>
<dbReference type="PANTHER" id="PTHR45739:SF13">
    <property type="entry name" value="CHONDROITIN SULFATE PROTEOGLYCAN 4"/>
    <property type="match status" value="1"/>
</dbReference>
<dbReference type="PANTHER" id="PTHR45739">
    <property type="entry name" value="MATRIX PROTEIN, PUTATIVE-RELATED"/>
    <property type="match status" value="1"/>
</dbReference>
<dbReference type="Pfam" id="PF16184">
    <property type="entry name" value="Cadherin_3"/>
    <property type="match status" value="12"/>
</dbReference>
<dbReference type="Pfam" id="PF02210">
    <property type="entry name" value="Laminin_G_2"/>
    <property type="match status" value="2"/>
</dbReference>
<dbReference type="SMART" id="SM00282">
    <property type="entry name" value="LamG"/>
    <property type="match status" value="2"/>
</dbReference>
<dbReference type="SUPFAM" id="SSF49899">
    <property type="entry name" value="Concanavalin A-like lectins/glucanases"/>
    <property type="match status" value="2"/>
</dbReference>
<dbReference type="PROSITE" id="PS51854">
    <property type="entry name" value="CSPG"/>
    <property type="match status" value="15"/>
</dbReference>
<dbReference type="PROSITE" id="PS50025">
    <property type="entry name" value="LAM_G_DOMAIN"/>
    <property type="match status" value="2"/>
</dbReference>
<feature type="signal peptide" evidence="4">
    <location>
        <begin position="1"/>
        <end position="29"/>
    </location>
</feature>
<feature type="chain" id="PRO_0000041962" description="Chondroitin sulfate proteoglycan 4">
    <location>
        <begin position="30"/>
        <end position="2322"/>
    </location>
</feature>
<feature type="topological domain" description="Extracellular" evidence="2">
    <location>
        <begin position="30"/>
        <end position="2224"/>
    </location>
</feature>
<feature type="transmembrane region" description="Helical" evidence="4">
    <location>
        <begin position="2225"/>
        <end position="2245"/>
    </location>
</feature>
<feature type="topological domain" description="Cytoplasmic" evidence="2">
    <location>
        <begin position="2246"/>
        <end position="2322"/>
    </location>
</feature>
<feature type="domain" description="Laminin G-like 1" evidence="5">
    <location>
        <begin position="30"/>
        <end position="192"/>
    </location>
</feature>
<feature type="domain" description="Laminin G-like 2" evidence="5">
    <location>
        <begin position="202"/>
        <end position="380"/>
    </location>
</feature>
<feature type="repeat" description="CSPG 1" evidence="6 10">
    <location>
        <begin position="428"/>
        <end position="523"/>
    </location>
</feature>
<feature type="repeat" description="CSPG 2" evidence="6 10">
    <location>
        <begin position="553"/>
        <end position="645"/>
    </location>
</feature>
<feature type="repeat" description="CSPG 3" evidence="6 10">
    <location>
        <begin position="662"/>
        <end position="764"/>
    </location>
</feature>
<feature type="repeat" description="CSPG 4" evidence="6 10">
    <location>
        <begin position="783"/>
        <end position="878"/>
    </location>
</feature>
<feature type="repeat" description="CSPG 5" evidence="6 10">
    <location>
        <begin position="898"/>
        <end position="989"/>
    </location>
</feature>
<feature type="repeat" description="CSPG 6" evidence="6 10">
    <location>
        <begin position="1018"/>
        <end position="1110"/>
    </location>
</feature>
<feature type="repeat" description="CSPG 7" evidence="6 10">
    <location>
        <begin position="1126"/>
        <end position="1216"/>
    </location>
</feature>
<feature type="repeat" description="CSPG 8" evidence="6 10">
    <location>
        <begin position="1238"/>
        <end position="1337"/>
    </location>
</feature>
<feature type="repeat" description="CSPG 9" evidence="6 10">
    <location>
        <begin position="1356"/>
        <end position="1449"/>
    </location>
</feature>
<feature type="repeat" description="CSPG 10" evidence="6 10">
    <location>
        <begin position="1473"/>
        <end position="1563"/>
    </location>
</feature>
<feature type="repeat" description="CSPG 11" evidence="6 10">
    <location>
        <begin position="1581"/>
        <end position="1679"/>
    </location>
</feature>
<feature type="repeat" description="CSPG 12" evidence="6 10">
    <location>
        <begin position="1704"/>
        <end position="1803"/>
    </location>
</feature>
<feature type="repeat" description="CSPG 13" evidence="6 10">
    <location>
        <begin position="1832"/>
        <end position="1924"/>
    </location>
</feature>
<feature type="repeat" description="CSPG 14" evidence="6 10">
    <location>
        <begin position="1941"/>
        <end position="2029"/>
    </location>
</feature>
<feature type="repeat" description="CSPG 15" evidence="6 10">
    <location>
        <begin position="2038"/>
        <end position="2147"/>
    </location>
</feature>
<feature type="region of interest" description="Globular or compact configuration stabilized by disulfide bonds">
    <location>
        <begin position="30"/>
        <end position="639"/>
    </location>
</feature>
<feature type="region of interest" description="Neurite growth inhibition" evidence="1">
    <location>
        <begin position="30"/>
        <end position="639"/>
    </location>
</feature>
<feature type="region of interest" description="Interaction with COL6A2" evidence="1">
    <location>
        <begin position="574"/>
        <end position="1040"/>
    </location>
</feature>
<feature type="region of interest" description="Interaction with COL5A1" evidence="1">
    <location>
        <begin position="631"/>
        <end position="1446"/>
    </location>
</feature>
<feature type="region of interest" description="Neurite growth inhibition" evidence="1">
    <location>
        <begin position="1586"/>
        <end position="2221"/>
    </location>
</feature>
<feature type="region of interest" description="Cysteine-containing">
    <location>
        <begin position="1587"/>
        <end position="2221"/>
    </location>
</feature>
<feature type="region of interest" description="Disordered" evidence="7">
    <location>
        <begin position="2182"/>
        <end position="2206"/>
    </location>
</feature>
<feature type="short sequence motif" description="PDZ-binding">
    <location>
        <begin position="2320"/>
        <end position="2322"/>
    </location>
</feature>
<feature type="modified residue" description="Phosphothreonine; by PKC/PRKCA" evidence="2">
    <location>
        <position position="2252"/>
    </location>
</feature>
<feature type="glycosylation site" description="N-linked (GlcNAc...) asparagine" evidence="4">
    <location>
        <position position="130"/>
    </location>
</feature>
<feature type="glycosylation site" description="N-linked (GlcNAc...) asparagine" evidence="4">
    <location>
        <position position="348"/>
    </location>
</feature>
<feature type="glycosylation site" description="N-linked (GlcNAc...) asparagine" evidence="4">
    <location>
        <position position="427"/>
    </location>
</feature>
<feature type="glycosylation site" description="N-linked (GlcNAc...) asparagine" evidence="4">
    <location>
        <position position="685"/>
    </location>
</feature>
<feature type="glycosylation site" description="N-linked (GlcNAc...) asparagine" evidence="4">
    <location>
        <position position="772"/>
    </location>
</feature>
<feature type="glycosylation site" description="O-linked (Xyl...) (chondroitin sulfate) serine" evidence="17 18">
    <location>
        <position position="995"/>
    </location>
</feature>
<feature type="glycosylation site" description="N-linked (GlcNAc...) asparagine" evidence="4">
    <location>
        <position position="1131"/>
    </location>
</feature>
<feature type="glycosylation site" description="N-linked (GlcNAc...) asparagine" evidence="4">
    <location>
        <position position="1202"/>
    </location>
</feature>
<feature type="glycosylation site" description="N-linked (GlcNAc...) asparagine" evidence="4">
    <location>
        <position position="1364"/>
    </location>
</feature>
<feature type="glycosylation site" description="N-linked (GlcNAc...) asparagine" evidence="4">
    <location>
        <position position="1449"/>
    </location>
</feature>
<feature type="glycosylation site" description="N-linked (GlcNAc...) asparagine" evidence="4">
    <location>
        <position position="1645"/>
    </location>
</feature>
<feature type="glycosylation site" description="N-linked (GlcNAc...) asparagine" evidence="4">
    <location>
        <position position="1909"/>
    </location>
</feature>
<feature type="glycosylation site" description="N-linked (GlcNAc...) asparagine" evidence="4">
    <location>
        <position position="2016"/>
    </location>
</feature>
<feature type="glycosylation site" description="N-linked (GlcNAc...) asparagine" evidence="4">
    <location>
        <position position="2034"/>
    </location>
</feature>
<feature type="glycosylation site" description="N-linked (GlcNAc...) asparagine" evidence="4">
    <location>
        <position position="2040"/>
    </location>
</feature>
<feature type="glycosylation site" description="N-linked (GlcNAc...) asparagine" evidence="13">
    <location>
        <position position="2075"/>
    </location>
</feature>
<feature type="disulfide bond" evidence="5">
    <location>
        <begin position="169"/>
        <end position="192"/>
    </location>
</feature>
<feature type="disulfide bond" evidence="5">
    <location>
        <begin position="354"/>
        <end position="380"/>
    </location>
</feature>
<feature type="sequence variant" id="VAR_061733" description="In dbSNP:rs8023621.">
    <original>R</original>
    <variation>H</variation>
    <location>
        <position position="1703"/>
    </location>
</feature>
<feature type="sequence conflict" description="In Ref. 1; CAA65529 and 2; AAQ62842." evidence="21" ref="1 2">
    <original>PR</original>
    <variation>RG</variation>
    <location>
        <begin position="5"/>
        <end position="6"/>
    </location>
</feature>
<feature type="sequence conflict" description="In Ref. 1; CAA65529." evidence="21" ref="1">
    <original>RH</original>
    <variation>HY</variation>
    <location>
        <begin position="477"/>
        <end position="478"/>
    </location>
</feature>
<feature type="sequence conflict" description="In Ref. 1; CAA65529." evidence="21" ref="1">
    <original>P</original>
    <variation>L</variation>
    <location>
        <position position="486"/>
    </location>
</feature>
<feature type="sequence conflict" description="In Ref. 1; CAA65529." evidence="21" ref="1">
    <original>R</original>
    <variation>C</variation>
    <location>
        <position position="631"/>
    </location>
</feature>
<feature type="sequence conflict" description="In Ref. 1; CAA65529." evidence="21" ref="1">
    <original>QGA</original>
    <variation>HST</variation>
    <location>
        <begin position="715"/>
        <end position="717"/>
    </location>
</feature>
<feature type="sequence conflict" description="In Ref. 1; CAA65529." evidence="21" ref="1">
    <original>H</original>
    <variation>L</variation>
    <location>
        <position position="942"/>
    </location>
</feature>
<feature type="sequence conflict" description="In Ref. 1; CAA65529." evidence="21" ref="1">
    <original>R</original>
    <variation>E</variation>
    <location>
        <position position="1208"/>
    </location>
</feature>
<feature type="sequence conflict" description="In Ref. 1; CAA65529." evidence="21" ref="1">
    <original>A</original>
    <variation>P</variation>
    <location>
        <position position="1405"/>
    </location>
</feature>
<feature type="sequence conflict" description="In Ref. 1; CAA65529." evidence="21" ref="1">
    <original>R</original>
    <variation>P</variation>
    <location>
        <position position="1557"/>
    </location>
</feature>
<feature type="helix" evidence="22">
    <location>
        <begin position="423"/>
        <end position="425"/>
    </location>
</feature>
<feature type="strand" evidence="22">
    <location>
        <begin position="431"/>
        <end position="434"/>
    </location>
</feature>
<feature type="strand" evidence="22">
    <location>
        <begin position="437"/>
        <end position="443"/>
    </location>
</feature>
<feature type="turn" evidence="22">
    <location>
        <begin position="449"/>
        <end position="451"/>
    </location>
</feature>
<feature type="strand" evidence="22">
    <location>
        <begin position="452"/>
        <end position="456"/>
    </location>
</feature>
<feature type="turn" evidence="22">
    <location>
        <begin position="458"/>
        <end position="462"/>
    </location>
</feature>
<feature type="helix" evidence="22">
    <location>
        <begin position="465"/>
        <end position="467"/>
    </location>
</feature>
<feature type="strand" evidence="22">
    <location>
        <begin position="472"/>
        <end position="474"/>
    </location>
</feature>
<feature type="strand" evidence="22">
    <location>
        <begin position="477"/>
        <end position="479"/>
    </location>
</feature>
<feature type="strand" evidence="23">
    <location>
        <begin position="493"/>
        <end position="495"/>
    </location>
</feature>
<feature type="helix" evidence="22">
    <location>
        <begin position="496"/>
        <end position="500"/>
    </location>
</feature>
<feature type="strand" evidence="22">
    <location>
        <begin position="504"/>
        <end position="507"/>
    </location>
</feature>
<feature type="strand" evidence="22">
    <location>
        <begin position="516"/>
        <end position="524"/>
    </location>
</feature>
<feature type="helix" evidence="22">
    <location>
        <begin position="533"/>
        <end position="536"/>
    </location>
</feature>
<feature type="strand" evidence="22">
    <location>
        <begin position="538"/>
        <end position="547"/>
    </location>
</feature>
<proteinExistence type="evidence at protein level"/>
<comment type="function">
    <text evidence="8 9 12">Proteoglycan playing a role in cell proliferation and migration which stimulates endothelial cells motility during microvascular morphogenesis. May also inhibit neurite outgrowth and growth cone collapse during axon regeneration. Cell surface receptor for collagen alpha 2(VI) which may confer cells ability to migrate on that substrate. Binds through its extracellular N-terminus growth factors, extracellular matrix proteases modulating their activity. May regulate MPP16-dependent degradation and invasion of type I collagen participating in melanoma cells invasion properties. May modulate the plasminogen system by enhancing plasminogen activation and inhibiting angiostatin. Also functions as a signal transducing protein by binding through its cytoplasmic C-terminus scaffolding and signaling proteins. May promote retraction fiber formation and cell polarization through Rho GTPase activation. May stimulate alpha-4, beta-1 integrin-mediated adhesion and spreading by recruiting and activating a signaling cascade through CDC42, ACK1 and BCAR1. May activate FAK and ERK1/ERK2 signaling cascades.</text>
</comment>
<comment type="subunit">
    <text evidence="1 8 9 11 20">Interacts with the first PDZ domain of MPDZ. Interacts with PRKCA. Binds TNC, laminin-1, COL5A1 and COL6A2. Interacts with PLG and angiostatin. Binds FGF2 and PDGFA. Interacts with GRIP1, GRIP2 and GRIA2. Forms a ternary complex with GRIP1 and GRIA2 (By similarity). Interacts with LGALS3 and the integrin composed of ITGB1 and ITGA3. Interacts with ITGA4 through its chondroitin sulfate glycosaminoglycan. Interacts with BCAR1, CDC42 and ACK1. Interacts with MMP16.</text>
</comment>
<comment type="subunit">
    <text evidence="14 15 16">(Microbial infection) Interacts with C.difficile toxin TcdB, suggesting that it may act as a receptor for TcdB.</text>
</comment>
<comment type="subcellular location">
    <subcellularLocation>
        <location evidence="2">Cell membrane</location>
        <topology evidence="2">Single-pass type I membrane protein</topology>
        <orientation evidence="2">Extracellular side</orientation>
    </subcellularLocation>
    <subcellularLocation>
        <location evidence="2">Apical cell membrane</location>
        <topology evidence="2">Single-pass type I membrane protein</topology>
        <orientation evidence="2">Extracellular side</orientation>
    </subcellularLocation>
    <subcellularLocation>
        <location evidence="2">Cell projection</location>
        <location evidence="2">Lamellipodium membrane</location>
        <topology evidence="2">Single-pass type I membrane protein</topology>
        <orientation evidence="2">Extracellular side</orientation>
    </subcellularLocation>
    <subcellularLocation>
        <location evidence="2">Cell surface</location>
    </subcellularLocation>
    <text evidence="2 3">Localized at the apical plasma membrane it relocalizes to the lamellipodia of astrocytoma upon phosphorylation by PRKCA. Localizes to the retraction fibers. Localizes to the plasma membrane of oligodendrocytes (By similarity).</text>
</comment>
<comment type="tissue specificity">
    <text evidence="17 18 19">Detected in fibroblasts (at protein level) (PubMed:36213313). Detected in placenta (at protein level) (PubMed:32337544). Detected in malignant melanoma cells.</text>
</comment>
<comment type="PTM">
    <text evidence="1 13">O-glycosylated; contains glycosaminoglycan chondroitin sulfate which are required for proper localization and function in stress fiber formation (By similarity). Involved in interaction with MMP16 and ITGA4.</text>
</comment>
<comment type="PTM">
    <text evidence="1">Phosphorylation by PRKCA regulates its subcellular location and function in cell motility.</text>
</comment>
<comment type="miscellaneous">
    <text>Valuable marker for several incompletely differentiated precursor cells.</text>
</comment>
<protein>
    <recommendedName>
        <fullName>Chondroitin sulfate proteoglycan 4</fullName>
    </recommendedName>
    <alternativeName>
        <fullName>Chondroitin sulfate proteoglycan NG2</fullName>
    </alternativeName>
    <alternativeName>
        <fullName>Melanoma chondroitin sulfate proteoglycan</fullName>
    </alternativeName>
    <alternativeName>
        <fullName>Melanoma-associated chondroitin sulfate proteoglycan</fullName>
    </alternativeName>
</protein>
<reference key="1">
    <citation type="journal article" date="1996" name="Proc. Natl. Acad. Sci. U.S.A.">
        <title>Molecular cloning of a human melanoma-associated chondroitin sulfate proteoglycan.</title>
        <authorList>
            <person name="Pluschke G."/>
            <person name="Vanek M."/>
            <person name="Evans A."/>
            <person name="Dittmar T."/>
            <person name="Schmid P."/>
            <person name="Itin P."/>
            <person name="Filardo E.J."/>
            <person name="Reisfeld R.A."/>
        </authorList>
    </citation>
    <scope>NUCLEOTIDE SEQUENCE [MRNA]</scope>
    <scope>TISSUE SPECIFICITY</scope>
    <source>
        <tissue>Melanoma</tissue>
    </source>
</reference>
<reference key="2">
    <citation type="journal article" date="2004" name="J. Cell Biol.">
        <title>Melanoma chondroitin sulfate proteoglycan enhances FAK and ERK activation by distinct mechanisms.</title>
        <authorList>
            <person name="Yang J."/>
            <person name="Price M.A."/>
            <person name="Neudauer C.L."/>
            <person name="Wilson C."/>
            <person name="Ferrone S."/>
            <person name="Xia H."/>
            <person name="Iida J."/>
            <person name="Simpson M.A."/>
            <person name="McCarthy J.B."/>
        </authorList>
    </citation>
    <scope>NUCLEOTIDE SEQUENCE [MRNA]</scope>
    <scope>FUNCTION</scope>
    <source>
        <tissue>Melanoma</tissue>
    </source>
</reference>
<reference key="3">
    <citation type="journal article" date="2006" name="Nature">
        <title>Analysis of the DNA sequence and duplication history of human chromosome 15.</title>
        <authorList>
            <person name="Zody M.C."/>
            <person name="Garber M."/>
            <person name="Sharpe T."/>
            <person name="Young S.K."/>
            <person name="Rowen L."/>
            <person name="O'Neill K."/>
            <person name="Whittaker C.A."/>
            <person name="Kamal M."/>
            <person name="Chang J.L."/>
            <person name="Cuomo C.A."/>
            <person name="Dewar K."/>
            <person name="FitzGerald M.G."/>
            <person name="Kodira C.D."/>
            <person name="Madan A."/>
            <person name="Qin S."/>
            <person name="Yang X."/>
            <person name="Abbasi N."/>
            <person name="Abouelleil A."/>
            <person name="Arachchi H.M."/>
            <person name="Baradarani L."/>
            <person name="Birditt B."/>
            <person name="Bloom S."/>
            <person name="Bloom T."/>
            <person name="Borowsky M.L."/>
            <person name="Burke J."/>
            <person name="Butler J."/>
            <person name="Cook A."/>
            <person name="DeArellano K."/>
            <person name="DeCaprio D."/>
            <person name="Dorris L. III"/>
            <person name="Dors M."/>
            <person name="Eichler E.E."/>
            <person name="Engels R."/>
            <person name="Fahey J."/>
            <person name="Fleetwood P."/>
            <person name="Friedman C."/>
            <person name="Gearin G."/>
            <person name="Hall J.L."/>
            <person name="Hensley G."/>
            <person name="Johnson E."/>
            <person name="Jones C."/>
            <person name="Kamat A."/>
            <person name="Kaur A."/>
            <person name="Locke D.P."/>
            <person name="Madan A."/>
            <person name="Munson G."/>
            <person name="Jaffe D.B."/>
            <person name="Lui A."/>
            <person name="Macdonald P."/>
            <person name="Mauceli E."/>
            <person name="Naylor J.W."/>
            <person name="Nesbitt R."/>
            <person name="Nicol R."/>
            <person name="O'Leary S.B."/>
            <person name="Ratcliffe A."/>
            <person name="Rounsley S."/>
            <person name="She X."/>
            <person name="Sneddon K.M.B."/>
            <person name="Stewart S."/>
            <person name="Sougnez C."/>
            <person name="Stone S.M."/>
            <person name="Topham K."/>
            <person name="Vincent D."/>
            <person name="Wang S."/>
            <person name="Zimmer A.R."/>
            <person name="Birren B.W."/>
            <person name="Hood L."/>
            <person name="Lander E.S."/>
            <person name="Nusbaum C."/>
        </authorList>
    </citation>
    <scope>NUCLEOTIDE SEQUENCE [LARGE SCALE GENOMIC DNA]</scope>
</reference>
<reference key="4">
    <citation type="submission" date="2005-09" db="EMBL/GenBank/DDBJ databases">
        <authorList>
            <person name="Mural R.J."/>
            <person name="Istrail S."/>
            <person name="Sutton G.G."/>
            <person name="Florea L."/>
            <person name="Halpern A.L."/>
            <person name="Mobarry C.M."/>
            <person name="Lippert R."/>
            <person name="Walenz B."/>
            <person name="Shatkay H."/>
            <person name="Dew I."/>
            <person name="Miller J.R."/>
            <person name="Flanigan M.J."/>
            <person name="Edwards N.J."/>
            <person name="Bolanos R."/>
            <person name="Fasulo D."/>
            <person name="Halldorsson B.V."/>
            <person name="Hannenhalli S."/>
            <person name="Turner R."/>
            <person name="Yooseph S."/>
            <person name="Lu F."/>
            <person name="Nusskern D.R."/>
            <person name="Shue B.C."/>
            <person name="Zheng X.H."/>
            <person name="Zhong F."/>
            <person name="Delcher A.L."/>
            <person name="Huson D.H."/>
            <person name="Kravitz S.A."/>
            <person name="Mouchard L."/>
            <person name="Reinert K."/>
            <person name="Remington K.A."/>
            <person name="Clark A.G."/>
            <person name="Waterman M.S."/>
            <person name="Eichler E.E."/>
            <person name="Adams M.D."/>
            <person name="Hunkapiller M.W."/>
            <person name="Myers E.W."/>
            <person name="Venter J.C."/>
        </authorList>
    </citation>
    <scope>NUCLEOTIDE SEQUENCE [LARGE SCALE GENOMIC DNA]</scope>
</reference>
<reference key="5">
    <citation type="journal article" date="1998" name="J. Biol. Chem.">
        <title>A role of chondroitin sulfate glycosaminoglycan binding site in alpha4beta1 integrin-mediated melanoma cell adhesion.</title>
        <authorList>
            <person name="Iida J."/>
            <person name="Meijne A.M.L."/>
            <person name="Oegema T.R. Jr."/>
            <person name="Yednock T.A."/>
            <person name="Kovach N.L."/>
            <person name="Furcht L.T."/>
            <person name="McCarthy J.B."/>
        </authorList>
    </citation>
    <scope>INTERACTION WITH ITGA4</scope>
</reference>
<reference key="6">
    <citation type="journal article" date="1999" name="Nat. Cell Biol.">
        <title>Melanoma chondroitin sulphate proteoglycan regulates cell spreading through Cdc42, Ack-1 and p130cas.</title>
        <authorList>
            <person name="Eisenmann K.M."/>
            <person name="McCarthy J.B."/>
            <person name="Simpson M.A."/>
            <person name="Keely P.J."/>
            <person name="Guan J.-L."/>
            <person name="Tachibana K."/>
            <person name="Lim L."/>
            <person name="Manser E."/>
            <person name="Furcht L.T."/>
            <person name="Iida J."/>
        </authorList>
    </citation>
    <scope>INTERACTION WITH BCAR1; CDC42 AND ACK1</scope>
    <scope>FUNCTION</scope>
</reference>
<reference key="7">
    <citation type="journal article" date="2001" name="J. Biol. Chem.">
        <title>Melanoma chondroitin sulfate proteoglycan regulates matrix metalloproteinase-dependent human melanoma invasion into type I collagen.</title>
        <authorList>
            <person name="Iida J."/>
            <person name="Pei D."/>
            <person name="Kang T."/>
            <person name="Simpson M.A."/>
            <person name="Herlyn M."/>
            <person name="Furcht L.T."/>
            <person name="McCarthy J.B."/>
        </authorList>
    </citation>
    <scope>INTERACTION WITH MMP16</scope>
    <scope>FUNCTION</scope>
</reference>
<reference key="8">
    <citation type="journal article" date="2002" name="FEBS Lett.">
        <title>A novel repeat in the melanoma-associated chondroitin sulfate proteoglycan defines a new protein family.</title>
        <authorList>
            <person name="Staub E."/>
            <person name="Hinzmann B."/>
            <person name="Rosenthal A."/>
        </authorList>
    </citation>
    <scope>IDENTIFICATION OF CSPG REPEATS</scope>
</reference>
<reference key="9">
    <citation type="journal article" date="2004" name="Mol. Biol. Cell">
        <title>NG2 proteoglycan promotes endothelial cell motility and angiogenesis via engagement of galectin-3 and alpha3beta1 integrin.</title>
        <authorList>
            <person name="Fukushi J."/>
            <person name="Makagiansar I.T."/>
            <person name="Stallcup W.B."/>
        </authorList>
    </citation>
    <scope>INTERACTION WITH ITGA3; ITGB1 AND LGALS3</scope>
</reference>
<reference key="10">
    <citation type="journal article" date="2005" name="J. Proteome Res.">
        <title>Human plasma N-glycoproteome analysis by immunoaffinity subtraction, hydrazide chemistry, and mass spectrometry.</title>
        <authorList>
            <person name="Liu T."/>
            <person name="Qian W.-J."/>
            <person name="Gritsenko M.A."/>
            <person name="Camp D.G. II"/>
            <person name="Monroe M.E."/>
            <person name="Moore R.J."/>
            <person name="Smith R.D."/>
        </authorList>
    </citation>
    <scope>GLYCOSYLATION [LARGE SCALE ANALYSIS] AT ASN-2075</scope>
    <source>
        <tissue>Plasma</tissue>
    </source>
</reference>
<reference key="11">
    <citation type="journal article" date="2015" name="Cell Res.">
        <title>Chondroitin sulfate proteoglycan 4 functions as the cellular receptor for Clostridium difficile toxin B.</title>
        <authorList>
            <person name="Yuan P."/>
            <person name="Zhang H."/>
            <person name="Cai C."/>
            <person name="Zhu S."/>
            <person name="Zhou Y."/>
            <person name="Yang X."/>
            <person name="He R."/>
            <person name="Li C."/>
            <person name="Guo S."/>
            <person name="Li S."/>
            <person name="Huang T."/>
            <person name="Perez-Cordon G."/>
            <person name="Feng H."/>
            <person name="Wei W."/>
        </authorList>
    </citation>
    <scope>INTERACTION WITH C.DIFFICILE TCDB (MICROBIAL INFECTION)</scope>
</reference>
<reference key="12">
    <citation type="journal article" date="2016" name="Nature">
        <title>Frizzled proteins are colonic epithelial receptors for C. difficile toxin B.</title>
        <authorList>
            <person name="Tao L."/>
            <person name="Zhang J."/>
            <person name="Meraner P."/>
            <person name="Tovaglieri A."/>
            <person name="Wu X."/>
            <person name="Gerhard R."/>
            <person name="Zhang X."/>
            <person name="Stallcup W.B."/>
            <person name="Miao J."/>
            <person name="He X."/>
            <person name="Hurdle J.G."/>
            <person name="Breault D.T."/>
            <person name="Brass A.L."/>
            <person name="Dong M."/>
        </authorList>
    </citation>
    <scope>INTERACTION WITH C.DIFFICILE TCDB (MICROBIAL INFECTION)</scope>
</reference>
<reference key="13">
    <citation type="journal article" date="2019" name="PLoS Biol.">
        <title>Selection and characterization of ultrahigh potency designed ankyrin repeat protein inhibitors of C. difficile toxin B.</title>
        <authorList>
            <person name="Simeon R."/>
            <person name="Jiang M."/>
            <person name="Chamoun-Emanuelli A.M."/>
            <person name="Yu H."/>
            <person name="Zhang Y."/>
            <person name="Meng R."/>
            <person name="Peng Z."/>
            <person name="Jakana J."/>
            <person name="Zhang J."/>
            <person name="Feng H."/>
            <person name="Chen Z."/>
        </authorList>
    </citation>
    <scope>INTERACTION WITH C.DIFFICILE TCDB (MICROBIAL INFECTION)</scope>
</reference>
<reference key="14">
    <citation type="journal article" date="2020" name="Glycobiology">
        <title>An affinity chromatography and glycoproteomics workflow to profile the chondroitin sulfate proteoglycans that interact with malarial VAR2CSA in the placenta and in cancer.</title>
        <authorList>
            <person name="Toledo A.G."/>
            <person name="Pihl J."/>
            <person name="Spliid C.B."/>
            <person name="Persson A."/>
            <person name="Nilsson J."/>
            <person name="Pereira M.A."/>
            <person name="Gustavsson T."/>
            <person name="Choudhary S."/>
            <person name="Oo H.Z."/>
            <person name="Black P.C."/>
            <person name="Daugaard M."/>
            <person name="Esko J.D."/>
            <person name="Larson G."/>
            <person name="Salanti A."/>
            <person name="Clausen T.M."/>
        </authorList>
    </citation>
    <scope>TISSUE SPECIFICITY</scope>
    <scope>GLYCOSYLATION AT SER-995</scope>
</reference>
<reference key="15">
    <citation type="journal article" date="2022" name="J. Proteins Proteom.">
        <title>Mass spectrometric analysis of chondroitin sulfate-linked peptides.</title>
        <authorList>
            <person name="Ramarajan M.G."/>
            <person name="Saraswat M."/>
            <person name="Budhraja R."/>
            <person name="Garapati K."/>
            <person name="Raymond K."/>
            <person name="Pandey A."/>
        </authorList>
    </citation>
    <scope>TISSUE SPECIFICITY</scope>
    <scope>GLYCOSYLATION AT SER-995</scope>
</reference>